<sequence>MTKWFNVGKIVNTHGVKGEIRVISRTDFPEERYKVGNTLYIWDEKGTDYLTVKVTSHRQHKTFDLLTLEGYNNVDEVEKLKGSLIKVPEEQLGELAEGEYYYHEIIGCNVVTEEGEALGTIKEILSPGANDVWVIKRPKGQDLLIPYIDDVVLQVNIENKLVTIHVMEGLL</sequence>
<keyword id="KW-0143">Chaperone</keyword>
<keyword id="KW-0963">Cytoplasm</keyword>
<keyword id="KW-0690">Ribosome biogenesis</keyword>
<keyword id="KW-0698">rRNA processing</keyword>
<protein>
    <recommendedName>
        <fullName evidence="1">Ribosome maturation factor RimM</fullName>
    </recommendedName>
</protein>
<dbReference type="EMBL" id="CP000903">
    <property type="protein sequence ID" value="ABY44836.1"/>
    <property type="molecule type" value="Genomic_DNA"/>
</dbReference>
<dbReference type="RefSeq" id="WP_002014521.1">
    <property type="nucleotide sequence ID" value="NC_010184.1"/>
</dbReference>
<dbReference type="SMR" id="A9VT80"/>
<dbReference type="GeneID" id="66266594"/>
<dbReference type="KEGG" id="bwe:BcerKBAB4_3665"/>
<dbReference type="eggNOG" id="COG0806">
    <property type="taxonomic scope" value="Bacteria"/>
</dbReference>
<dbReference type="HOGENOM" id="CLU_077636_3_1_9"/>
<dbReference type="Proteomes" id="UP000002154">
    <property type="component" value="Chromosome"/>
</dbReference>
<dbReference type="GO" id="GO:0005737">
    <property type="term" value="C:cytoplasm"/>
    <property type="evidence" value="ECO:0007669"/>
    <property type="project" value="UniProtKB-SubCell"/>
</dbReference>
<dbReference type="GO" id="GO:0005840">
    <property type="term" value="C:ribosome"/>
    <property type="evidence" value="ECO:0007669"/>
    <property type="project" value="InterPro"/>
</dbReference>
<dbReference type="GO" id="GO:0043022">
    <property type="term" value="F:ribosome binding"/>
    <property type="evidence" value="ECO:0007669"/>
    <property type="project" value="InterPro"/>
</dbReference>
<dbReference type="GO" id="GO:0042274">
    <property type="term" value="P:ribosomal small subunit biogenesis"/>
    <property type="evidence" value="ECO:0007669"/>
    <property type="project" value="UniProtKB-UniRule"/>
</dbReference>
<dbReference type="GO" id="GO:0006364">
    <property type="term" value="P:rRNA processing"/>
    <property type="evidence" value="ECO:0007669"/>
    <property type="project" value="UniProtKB-UniRule"/>
</dbReference>
<dbReference type="Gene3D" id="2.30.30.240">
    <property type="entry name" value="PRC-barrel domain"/>
    <property type="match status" value="1"/>
</dbReference>
<dbReference type="Gene3D" id="2.40.30.60">
    <property type="entry name" value="RimM"/>
    <property type="match status" value="1"/>
</dbReference>
<dbReference type="HAMAP" id="MF_00014">
    <property type="entry name" value="Ribosome_mat_RimM"/>
    <property type="match status" value="1"/>
</dbReference>
<dbReference type="InterPro" id="IPR027275">
    <property type="entry name" value="PRC-brl_dom"/>
</dbReference>
<dbReference type="InterPro" id="IPR011033">
    <property type="entry name" value="PRC_barrel-like_sf"/>
</dbReference>
<dbReference type="InterPro" id="IPR011961">
    <property type="entry name" value="RimM"/>
</dbReference>
<dbReference type="InterPro" id="IPR002676">
    <property type="entry name" value="RimM_N"/>
</dbReference>
<dbReference type="InterPro" id="IPR036976">
    <property type="entry name" value="RimM_N_sf"/>
</dbReference>
<dbReference type="InterPro" id="IPR009000">
    <property type="entry name" value="Transl_B-barrel_sf"/>
</dbReference>
<dbReference type="NCBIfam" id="TIGR02273">
    <property type="entry name" value="16S_RimM"/>
    <property type="match status" value="1"/>
</dbReference>
<dbReference type="PANTHER" id="PTHR33692">
    <property type="entry name" value="RIBOSOME MATURATION FACTOR RIMM"/>
    <property type="match status" value="1"/>
</dbReference>
<dbReference type="PANTHER" id="PTHR33692:SF1">
    <property type="entry name" value="RIBOSOME MATURATION FACTOR RIMM"/>
    <property type="match status" value="1"/>
</dbReference>
<dbReference type="Pfam" id="PF05239">
    <property type="entry name" value="PRC"/>
    <property type="match status" value="1"/>
</dbReference>
<dbReference type="Pfam" id="PF01782">
    <property type="entry name" value="RimM"/>
    <property type="match status" value="1"/>
</dbReference>
<dbReference type="SUPFAM" id="SSF50346">
    <property type="entry name" value="PRC-barrel domain"/>
    <property type="match status" value="1"/>
</dbReference>
<dbReference type="SUPFAM" id="SSF50447">
    <property type="entry name" value="Translation proteins"/>
    <property type="match status" value="1"/>
</dbReference>
<organism>
    <name type="scientific">Bacillus mycoides (strain KBAB4)</name>
    <name type="common">Bacillus weihenstephanensis</name>
    <dbReference type="NCBI Taxonomy" id="315730"/>
    <lineage>
        <taxon>Bacteria</taxon>
        <taxon>Bacillati</taxon>
        <taxon>Bacillota</taxon>
        <taxon>Bacilli</taxon>
        <taxon>Bacillales</taxon>
        <taxon>Bacillaceae</taxon>
        <taxon>Bacillus</taxon>
        <taxon>Bacillus cereus group</taxon>
    </lineage>
</organism>
<name>RIMM_BACMK</name>
<evidence type="ECO:0000255" key="1">
    <source>
        <dbReference type="HAMAP-Rule" id="MF_00014"/>
    </source>
</evidence>
<comment type="function">
    <text evidence="1">An accessory protein needed during the final step in the assembly of 30S ribosomal subunit, possibly for assembly of the head region. Essential for efficient processing of 16S rRNA. May be needed both before and after RbfA during the maturation of 16S rRNA. It has affinity for free ribosomal 30S subunits but not for 70S ribosomes.</text>
</comment>
<comment type="subunit">
    <text evidence="1">Binds ribosomal protein uS19.</text>
</comment>
<comment type="subcellular location">
    <subcellularLocation>
        <location evidence="1">Cytoplasm</location>
    </subcellularLocation>
</comment>
<comment type="domain">
    <text evidence="1">The PRC barrel domain binds ribosomal protein uS19.</text>
</comment>
<comment type="similarity">
    <text evidence="1">Belongs to the RimM family.</text>
</comment>
<feature type="chain" id="PRO_1000089490" description="Ribosome maturation factor RimM">
    <location>
        <begin position="1"/>
        <end position="171"/>
    </location>
</feature>
<feature type="domain" description="PRC barrel" evidence="1">
    <location>
        <begin position="96"/>
        <end position="170"/>
    </location>
</feature>
<proteinExistence type="inferred from homology"/>
<reference key="1">
    <citation type="journal article" date="2008" name="Chem. Biol. Interact.">
        <title>Extending the Bacillus cereus group genomics to putative food-borne pathogens of different toxicity.</title>
        <authorList>
            <person name="Lapidus A."/>
            <person name="Goltsman E."/>
            <person name="Auger S."/>
            <person name="Galleron N."/>
            <person name="Segurens B."/>
            <person name="Dossat C."/>
            <person name="Land M.L."/>
            <person name="Broussolle V."/>
            <person name="Brillard J."/>
            <person name="Guinebretiere M.-H."/>
            <person name="Sanchis V."/>
            <person name="Nguen-the C."/>
            <person name="Lereclus D."/>
            <person name="Richardson P."/>
            <person name="Wincker P."/>
            <person name="Weissenbach J."/>
            <person name="Ehrlich S.D."/>
            <person name="Sorokin A."/>
        </authorList>
    </citation>
    <scope>NUCLEOTIDE SEQUENCE [LARGE SCALE GENOMIC DNA]</scope>
    <source>
        <strain>KBAB4</strain>
    </source>
</reference>
<gene>
    <name evidence="1" type="primary">rimM</name>
    <name type="ordered locus">BcerKBAB4_3665</name>
</gene>
<accession>A9VT80</accession>